<dbReference type="EMBL" id="CP001132">
    <property type="protein sequence ID" value="ACH82748.1"/>
    <property type="molecule type" value="Genomic_DNA"/>
</dbReference>
<dbReference type="RefSeq" id="WP_012536085.1">
    <property type="nucleotide sequence ID" value="NC_011206.1"/>
</dbReference>
<dbReference type="SMR" id="B5ELX6"/>
<dbReference type="GeneID" id="65279703"/>
<dbReference type="KEGG" id="afe:Lferr_0494"/>
<dbReference type="eggNOG" id="COG0480">
    <property type="taxonomic scope" value="Bacteria"/>
</dbReference>
<dbReference type="HOGENOM" id="CLU_002794_4_1_6"/>
<dbReference type="GO" id="GO:0005737">
    <property type="term" value="C:cytoplasm"/>
    <property type="evidence" value="ECO:0007669"/>
    <property type="project" value="UniProtKB-SubCell"/>
</dbReference>
<dbReference type="GO" id="GO:0005525">
    <property type="term" value="F:GTP binding"/>
    <property type="evidence" value="ECO:0007669"/>
    <property type="project" value="UniProtKB-UniRule"/>
</dbReference>
<dbReference type="GO" id="GO:0003924">
    <property type="term" value="F:GTPase activity"/>
    <property type="evidence" value="ECO:0007669"/>
    <property type="project" value="InterPro"/>
</dbReference>
<dbReference type="GO" id="GO:0003746">
    <property type="term" value="F:translation elongation factor activity"/>
    <property type="evidence" value="ECO:0007669"/>
    <property type="project" value="UniProtKB-UniRule"/>
</dbReference>
<dbReference type="GO" id="GO:0032790">
    <property type="term" value="P:ribosome disassembly"/>
    <property type="evidence" value="ECO:0007669"/>
    <property type="project" value="TreeGrafter"/>
</dbReference>
<dbReference type="CDD" id="cd01886">
    <property type="entry name" value="EF-G"/>
    <property type="match status" value="1"/>
</dbReference>
<dbReference type="CDD" id="cd16262">
    <property type="entry name" value="EFG_III"/>
    <property type="match status" value="1"/>
</dbReference>
<dbReference type="CDD" id="cd01434">
    <property type="entry name" value="EFG_mtEFG1_IV"/>
    <property type="match status" value="1"/>
</dbReference>
<dbReference type="CDD" id="cd03713">
    <property type="entry name" value="EFG_mtEFG_C"/>
    <property type="match status" value="1"/>
</dbReference>
<dbReference type="CDD" id="cd04088">
    <property type="entry name" value="EFG_mtEFG_II"/>
    <property type="match status" value="1"/>
</dbReference>
<dbReference type="FunFam" id="2.40.30.10:FF:000006">
    <property type="entry name" value="Elongation factor G"/>
    <property type="match status" value="1"/>
</dbReference>
<dbReference type="FunFam" id="3.30.230.10:FF:000003">
    <property type="entry name" value="Elongation factor G"/>
    <property type="match status" value="1"/>
</dbReference>
<dbReference type="FunFam" id="3.30.70.240:FF:000001">
    <property type="entry name" value="Elongation factor G"/>
    <property type="match status" value="1"/>
</dbReference>
<dbReference type="FunFam" id="3.30.70.870:FF:000001">
    <property type="entry name" value="Elongation factor G"/>
    <property type="match status" value="1"/>
</dbReference>
<dbReference type="FunFam" id="3.40.50.300:FF:000029">
    <property type="entry name" value="Elongation factor G"/>
    <property type="match status" value="1"/>
</dbReference>
<dbReference type="Gene3D" id="3.30.230.10">
    <property type="match status" value="1"/>
</dbReference>
<dbReference type="Gene3D" id="3.30.70.240">
    <property type="match status" value="1"/>
</dbReference>
<dbReference type="Gene3D" id="3.30.70.870">
    <property type="entry name" value="Elongation Factor G (Translational Gtpase), domain 3"/>
    <property type="match status" value="1"/>
</dbReference>
<dbReference type="Gene3D" id="3.40.50.300">
    <property type="entry name" value="P-loop containing nucleotide triphosphate hydrolases"/>
    <property type="match status" value="1"/>
</dbReference>
<dbReference type="Gene3D" id="2.40.30.10">
    <property type="entry name" value="Translation factors"/>
    <property type="match status" value="1"/>
</dbReference>
<dbReference type="HAMAP" id="MF_00054_B">
    <property type="entry name" value="EF_G_EF_2_B"/>
    <property type="match status" value="1"/>
</dbReference>
<dbReference type="InterPro" id="IPR053905">
    <property type="entry name" value="EF-G-like_DII"/>
</dbReference>
<dbReference type="InterPro" id="IPR041095">
    <property type="entry name" value="EFG_II"/>
</dbReference>
<dbReference type="InterPro" id="IPR009022">
    <property type="entry name" value="EFG_III"/>
</dbReference>
<dbReference type="InterPro" id="IPR035647">
    <property type="entry name" value="EFG_III/V"/>
</dbReference>
<dbReference type="InterPro" id="IPR047872">
    <property type="entry name" value="EFG_IV"/>
</dbReference>
<dbReference type="InterPro" id="IPR035649">
    <property type="entry name" value="EFG_V"/>
</dbReference>
<dbReference type="InterPro" id="IPR000640">
    <property type="entry name" value="EFG_V-like"/>
</dbReference>
<dbReference type="InterPro" id="IPR031157">
    <property type="entry name" value="G_TR_CS"/>
</dbReference>
<dbReference type="InterPro" id="IPR027417">
    <property type="entry name" value="P-loop_NTPase"/>
</dbReference>
<dbReference type="InterPro" id="IPR020568">
    <property type="entry name" value="Ribosomal_Su5_D2-typ_SF"/>
</dbReference>
<dbReference type="InterPro" id="IPR014721">
    <property type="entry name" value="Ribsml_uS5_D2-typ_fold_subgr"/>
</dbReference>
<dbReference type="InterPro" id="IPR005225">
    <property type="entry name" value="Small_GTP-bd"/>
</dbReference>
<dbReference type="InterPro" id="IPR000795">
    <property type="entry name" value="T_Tr_GTP-bd_dom"/>
</dbReference>
<dbReference type="InterPro" id="IPR009000">
    <property type="entry name" value="Transl_B-barrel_sf"/>
</dbReference>
<dbReference type="InterPro" id="IPR004540">
    <property type="entry name" value="Transl_elong_EFG/EF2"/>
</dbReference>
<dbReference type="InterPro" id="IPR005517">
    <property type="entry name" value="Transl_elong_EFG/EF2_IV"/>
</dbReference>
<dbReference type="NCBIfam" id="TIGR00484">
    <property type="entry name" value="EF-G"/>
    <property type="match status" value="1"/>
</dbReference>
<dbReference type="NCBIfam" id="NF009381">
    <property type="entry name" value="PRK12740.1-5"/>
    <property type="match status" value="1"/>
</dbReference>
<dbReference type="NCBIfam" id="TIGR00231">
    <property type="entry name" value="small_GTP"/>
    <property type="match status" value="1"/>
</dbReference>
<dbReference type="PANTHER" id="PTHR43261:SF1">
    <property type="entry name" value="RIBOSOME-RELEASING FACTOR 2, MITOCHONDRIAL"/>
    <property type="match status" value="1"/>
</dbReference>
<dbReference type="PANTHER" id="PTHR43261">
    <property type="entry name" value="TRANSLATION ELONGATION FACTOR G-RELATED"/>
    <property type="match status" value="1"/>
</dbReference>
<dbReference type="Pfam" id="PF22042">
    <property type="entry name" value="EF-G_D2"/>
    <property type="match status" value="1"/>
</dbReference>
<dbReference type="Pfam" id="PF00679">
    <property type="entry name" value="EFG_C"/>
    <property type="match status" value="1"/>
</dbReference>
<dbReference type="Pfam" id="PF14492">
    <property type="entry name" value="EFG_III"/>
    <property type="match status" value="1"/>
</dbReference>
<dbReference type="Pfam" id="PF03764">
    <property type="entry name" value="EFG_IV"/>
    <property type="match status" value="1"/>
</dbReference>
<dbReference type="Pfam" id="PF00009">
    <property type="entry name" value="GTP_EFTU"/>
    <property type="match status" value="1"/>
</dbReference>
<dbReference type="PRINTS" id="PR00315">
    <property type="entry name" value="ELONGATNFCT"/>
</dbReference>
<dbReference type="SMART" id="SM00838">
    <property type="entry name" value="EFG_C"/>
    <property type="match status" value="1"/>
</dbReference>
<dbReference type="SMART" id="SM00889">
    <property type="entry name" value="EFG_IV"/>
    <property type="match status" value="1"/>
</dbReference>
<dbReference type="SUPFAM" id="SSF54980">
    <property type="entry name" value="EF-G C-terminal domain-like"/>
    <property type="match status" value="2"/>
</dbReference>
<dbReference type="SUPFAM" id="SSF52540">
    <property type="entry name" value="P-loop containing nucleoside triphosphate hydrolases"/>
    <property type="match status" value="1"/>
</dbReference>
<dbReference type="SUPFAM" id="SSF54211">
    <property type="entry name" value="Ribosomal protein S5 domain 2-like"/>
    <property type="match status" value="1"/>
</dbReference>
<dbReference type="SUPFAM" id="SSF50447">
    <property type="entry name" value="Translation proteins"/>
    <property type="match status" value="1"/>
</dbReference>
<dbReference type="PROSITE" id="PS00301">
    <property type="entry name" value="G_TR_1"/>
    <property type="match status" value="1"/>
</dbReference>
<dbReference type="PROSITE" id="PS51722">
    <property type="entry name" value="G_TR_2"/>
    <property type="match status" value="1"/>
</dbReference>
<reference key="1">
    <citation type="submission" date="2008-08" db="EMBL/GenBank/DDBJ databases">
        <title>Complete sequence of Acidithiobacillus ferrooxidans ATCC 53993.</title>
        <authorList>
            <person name="Lucas S."/>
            <person name="Copeland A."/>
            <person name="Lapidus A."/>
            <person name="Glavina del Rio T."/>
            <person name="Dalin E."/>
            <person name="Tice H."/>
            <person name="Bruce D."/>
            <person name="Goodwin L."/>
            <person name="Pitluck S."/>
            <person name="Sims D."/>
            <person name="Brettin T."/>
            <person name="Detter J.C."/>
            <person name="Han C."/>
            <person name="Kuske C.R."/>
            <person name="Larimer F."/>
            <person name="Land M."/>
            <person name="Hauser L."/>
            <person name="Kyrpides N."/>
            <person name="Lykidis A."/>
            <person name="Borole A.P."/>
        </authorList>
    </citation>
    <scope>NUCLEOTIDE SEQUENCE [LARGE SCALE GENOMIC DNA]</scope>
    <source>
        <strain>ATCC 53993 / BNL-5-31</strain>
    </source>
</reference>
<accession>B5ELX6</accession>
<organism>
    <name type="scientific">Acidithiobacillus ferrooxidans (strain ATCC 53993 / BNL-5-31)</name>
    <name type="common">Leptospirillum ferrooxidans (ATCC 53993)</name>
    <dbReference type="NCBI Taxonomy" id="380394"/>
    <lineage>
        <taxon>Bacteria</taxon>
        <taxon>Pseudomonadati</taxon>
        <taxon>Pseudomonadota</taxon>
        <taxon>Acidithiobacillia</taxon>
        <taxon>Acidithiobacillales</taxon>
        <taxon>Acidithiobacillaceae</taxon>
        <taxon>Acidithiobacillus</taxon>
    </lineage>
</organism>
<gene>
    <name evidence="1" type="primary">fusA</name>
    <name type="ordered locus">Lferr_0494</name>
</gene>
<protein>
    <recommendedName>
        <fullName evidence="1">Elongation factor G</fullName>
        <shortName evidence="1">EF-G</shortName>
    </recommendedName>
</protein>
<comment type="function">
    <text evidence="1">Catalyzes the GTP-dependent ribosomal translocation step during translation elongation. During this step, the ribosome changes from the pre-translocational (PRE) to the post-translocational (POST) state as the newly formed A-site-bound peptidyl-tRNA and P-site-bound deacylated tRNA move to the P and E sites, respectively. Catalyzes the coordinated movement of the two tRNA molecules, the mRNA and conformational changes in the ribosome.</text>
</comment>
<comment type="subcellular location">
    <subcellularLocation>
        <location evidence="1">Cytoplasm</location>
    </subcellularLocation>
</comment>
<comment type="similarity">
    <text evidence="1">Belongs to the TRAFAC class translation factor GTPase superfamily. Classic translation factor GTPase family. EF-G/EF-2 subfamily.</text>
</comment>
<feature type="chain" id="PRO_1000091688" description="Elongation factor G">
    <location>
        <begin position="1"/>
        <end position="699"/>
    </location>
</feature>
<feature type="domain" description="tr-type G">
    <location>
        <begin position="8"/>
        <end position="290"/>
    </location>
</feature>
<feature type="binding site" evidence="1">
    <location>
        <begin position="17"/>
        <end position="24"/>
    </location>
    <ligand>
        <name>GTP</name>
        <dbReference type="ChEBI" id="CHEBI:37565"/>
    </ligand>
</feature>
<feature type="binding site" evidence="1">
    <location>
        <begin position="88"/>
        <end position="92"/>
    </location>
    <ligand>
        <name>GTP</name>
        <dbReference type="ChEBI" id="CHEBI:37565"/>
    </ligand>
</feature>
<feature type="binding site" evidence="1">
    <location>
        <begin position="142"/>
        <end position="145"/>
    </location>
    <ligand>
        <name>GTP</name>
        <dbReference type="ChEBI" id="CHEBI:37565"/>
    </ligand>
</feature>
<keyword id="KW-0963">Cytoplasm</keyword>
<keyword id="KW-0251">Elongation factor</keyword>
<keyword id="KW-0342">GTP-binding</keyword>
<keyword id="KW-0547">Nucleotide-binding</keyword>
<keyword id="KW-0648">Protein biosynthesis</keyword>
<name>EFG_ACIF5</name>
<sequence length="699" mass="76555">MARTTPIERYRNIGIMAHIDAGKTTTTERILFYTGVSHKIGEVHEGTAVMDWMAQEQERGITITSAATTCFWKGMDGQRAEHRINIIDTPGHVDFTIEVERSLRVLDGAMAVFCAVGGVQPQSETVWRQANKYKVPRIAFVNKMDRQGANFKRVVDQIATKLRGNPVPVQLPIGEEDHFSGVIDLMKMKSINWDDALQGTRFTEEDIPPALQADAEAARHFMVEAIADADEDVMMKYLEGEEISIAELQAALRKATISGAVVPVLCGSAFKNKGVQAALDAVLDYLPSPVDIKPVEGTNPDNGEEIVRFADDSEPFSALAFKIATDPFVGQLTFFRVYSGVLTAGSTVLNPGRNQKERIGRVLQMHANERHEIKEVLAGDIAAAVGLKTAYTGDTLCDLNKPIALEQMEFPEPVIHVAVEPKTKADQEKMGIALGKLAQEDPSFRVRTDQESGQTIISGMGELHLEIIVDRMKREFGVEATVGAPQVAYRETIRKTVESEGKFVRQSGGRGQYGHVWLRLEPLEPGSGFVFENGVVGGTVPKEFINPTEKGVEEALENGIIAGFPVVDVKVTIFDGSYHDVDSSEAAFKIAGSMGFKAGAAKANPVLLEPIFAVEVVTPEEYMGDIIGDINSRRGMMQGMEDEAGAKLIRCEVPLAEMFGYATTVRSLSQGRATYTMQFEKYMEVPGHVAEAIVKKSQR</sequence>
<evidence type="ECO:0000255" key="1">
    <source>
        <dbReference type="HAMAP-Rule" id="MF_00054"/>
    </source>
</evidence>
<proteinExistence type="inferred from homology"/>